<sequence>MAQISLTFPDGNAREFPAGITPAEVAASISTSLGKKAISASVDGRHYDLQWPIEADAKIAIHTMADEAQALELIRHDLAHIMARAVQELWPDVKVTIGPVVANGWYYDFDREETFTPEDLGAIEKRMKEIINARDAVRTETWDRDRAIAHYEARGENFKVELVQAIPADQQIRMYWHGNWQDLCRGPHLQHTGQVPADAFQLMSVAGAYWRGDSNNKQLQRIYGVAFKTRDELKAYLHMLEEAAKRDHRKLGKEMELFHLQEEAPGMVFWHPNGWQIYRTLEDYMRGRLRKAGYKEIRTPQVVDRKLWEASGHWEAYKENMFLVEVEEEHAKEKRINALKPMNCPCHVQVYNQGLKSYRDLPLRLAEFGSCHRYESSGSMHGLMRVRGFVQDDAHIFCTEDQIEGECAAFIELLSSVYKDLGFDSFEIKLSTRPEVRIGSDEAWDKVETALENAIKKVGAAYEIDPGEGAFYGPKLDFKLTDAIGRKWQCGTFQVDPNLPTRLGAEYIGEDGAKHRPYMLHRAILGSFERFIGILIENYAGKLPFWLAPRQVVVASIVSDADPYVAEVVAALRARGVRAEADTRNEKINYKVREHSVGKVPVILAIGMQEVEGRTVSVRRLGETGTESAPLDQVVERLATDARIPG</sequence>
<comment type="function">
    <text evidence="1">Catalyzes the attachment of threonine to tRNA(Thr) in a two-step reaction: L-threonine is first activated by ATP to form Thr-AMP and then transferred to the acceptor end of tRNA(Thr). Also edits incorrectly charged L-seryl-tRNA(Thr).</text>
</comment>
<comment type="catalytic activity">
    <reaction evidence="1">
        <text>tRNA(Thr) + L-threonine + ATP = L-threonyl-tRNA(Thr) + AMP + diphosphate + H(+)</text>
        <dbReference type="Rhea" id="RHEA:24624"/>
        <dbReference type="Rhea" id="RHEA-COMP:9670"/>
        <dbReference type="Rhea" id="RHEA-COMP:9704"/>
        <dbReference type="ChEBI" id="CHEBI:15378"/>
        <dbReference type="ChEBI" id="CHEBI:30616"/>
        <dbReference type="ChEBI" id="CHEBI:33019"/>
        <dbReference type="ChEBI" id="CHEBI:57926"/>
        <dbReference type="ChEBI" id="CHEBI:78442"/>
        <dbReference type="ChEBI" id="CHEBI:78534"/>
        <dbReference type="ChEBI" id="CHEBI:456215"/>
        <dbReference type="EC" id="6.1.1.3"/>
    </reaction>
</comment>
<comment type="cofactor">
    <cofactor evidence="1">
        <name>Zn(2+)</name>
        <dbReference type="ChEBI" id="CHEBI:29105"/>
    </cofactor>
    <text evidence="1">Binds 1 zinc ion per subunit.</text>
</comment>
<comment type="subunit">
    <text evidence="1">Homodimer.</text>
</comment>
<comment type="subcellular location">
    <subcellularLocation>
        <location evidence="1">Cytoplasm</location>
    </subcellularLocation>
</comment>
<comment type="similarity">
    <text evidence="1">Belongs to the class-II aminoacyl-tRNA synthetase family.</text>
</comment>
<reference key="1">
    <citation type="submission" date="2007-04" db="EMBL/GenBank/DDBJ databases">
        <title>Complete sequence of chromosome of Rhodobacter sphaeroides ATCC 17025.</title>
        <authorList>
            <consortium name="US DOE Joint Genome Institute"/>
            <person name="Copeland A."/>
            <person name="Lucas S."/>
            <person name="Lapidus A."/>
            <person name="Barry K."/>
            <person name="Detter J.C."/>
            <person name="Glavina del Rio T."/>
            <person name="Hammon N."/>
            <person name="Israni S."/>
            <person name="Dalin E."/>
            <person name="Tice H."/>
            <person name="Pitluck S."/>
            <person name="Chertkov O."/>
            <person name="Brettin T."/>
            <person name="Bruce D."/>
            <person name="Han C."/>
            <person name="Schmutz J."/>
            <person name="Larimer F."/>
            <person name="Land M."/>
            <person name="Hauser L."/>
            <person name="Kyrpides N."/>
            <person name="Kim E."/>
            <person name="Richardson P."/>
            <person name="Mackenzie C."/>
            <person name="Choudhary M."/>
            <person name="Donohue T.J."/>
            <person name="Kaplan S."/>
        </authorList>
    </citation>
    <scope>NUCLEOTIDE SEQUENCE [LARGE SCALE GENOMIC DNA]</scope>
    <source>
        <strain>ATCC 17025 / ATH 2.4.3</strain>
    </source>
</reference>
<gene>
    <name evidence="1" type="primary">thrS</name>
    <name type="ordered locus">Rsph17025_0851</name>
</gene>
<evidence type="ECO:0000255" key="1">
    <source>
        <dbReference type="HAMAP-Rule" id="MF_00184"/>
    </source>
</evidence>
<evidence type="ECO:0000255" key="2">
    <source>
        <dbReference type="PROSITE-ProRule" id="PRU01228"/>
    </source>
</evidence>
<accession>A4WQU1</accession>
<keyword id="KW-0030">Aminoacyl-tRNA synthetase</keyword>
<keyword id="KW-0067">ATP-binding</keyword>
<keyword id="KW-0963">Cytoplasm</keyword>
<keyword id="KW-0436">Ligase</keyword>
<keyword id="KW-0479">Metal-binding</keyword>
<keyword id="KW-0547">Nucleotide-binding</keyword>
<keyword id="KW-0648">Protein biosynthesis</keyword>
<keyword id="KW-0694">RNA-binding</keyword>
<keyword id="KW-0820">tRNA-binding</keyword>
<keyword id="KW-0862">Zinc</keyword>
<proteinExistence type="inferred from homology"/>
<organism>
    <name type="scientific">Cereibacter sphaeroides (strain ATCC 17025 / ATH 2.4.3)</name>
    <name type="common">Rhodobacter sphaeroides</name>
    <dbReference type="NCBI Taxonomy" id="349102"/>
    <lineage>
        <taxon>Bacteria</taxon>
        <taxon>Pseudomonadati</taxon>
        <taxon>Pseudomonadota</taxon>
        <taxon>Alphaproteobacteria</taxon>
        <taxon>Rhodobacterales</taxon>
        <taxon>Paracoccaceae</taxon>
        <taxon>Cereibacter</taxon>
    </lineage>
</organism>
<name>SYT_CERS5</name>
<feature type="chain" id="PRO_1000020491" description="Threonine--tRNA ligase">
    <location>
        <begin position="1"/>
        <end position="646"/>
    </location>
</feature>
<feature type="domain" description="TGS" evidence="2">
    <location>
        <begin position="1"/>
        <end position="63"/>
    </location>
</feature>
<feature type="region of interest" description="Catalytic" evidence="1">
    <location>
        <begin position="247"/>
        <end position="544"/>
    </location>
</feature>
<feature type="binding site" evidence="1">
    <location>
        <position position="344"/>
    </location>
    <ligand>
        <name>Zn(2+)</name>
        <dbReference type="ChEBI" id="CHEBI:29105"/>
    </ligand>
</feature>
<feature type="binding site" evidence="1">
    <location>
        <position position="395"/>
    </location>
    <ligand>
        <name>Zn(2+)</name>
        <dbReference type="ChEBI" id="CHEBI:29105"/>
    </ligand>
</feature>
<feature type="binding site" evidence="1">
    <location>
        <position position="521"/>
    </location>
    <ligand>
        <name>Zn(2+)</name>
        <dbReference type="ChEBI" id="CHEBI:29105"/>
    </ligand>
</feature>
<dbReference type="EC" id="6.1.1.3" evidence="1"/>
<dbReference type="EMBL" id="CP000661">
    <property type="protein sequence ID" value="ABP69755.1"/>
    <property type="molecule type" value="Genomic_DNA"/>
</dbReference>
<dbReference type="SMR" id="A4WQU1"/>
<dbReference type="STRING" id="349102.Rsph17025_0851"/>
<dbReference type="KEGG" id="rsq:Rsph17025_0851"/>
<dbReference type="eggNOG" id="COG0441">
    <property type="taxonomic scope" value="Bacteria"/>
</dbReference>
<dbReference type="HOGENOM" id="CLU_008554_0_1_5"/>
<dbReference type="BioCyc" id="RSPH349102:G1G8M-874-MONOMER"/>
<dbReference type="GO" id="GO:0005737">
    <property type="term" value="C:cytoplasm"/>
    <property type="evidence" value="ECO:0007669"/>
    <property type="project" value="UniProtKB-SubCell"/>
</dbReference>
<dbReference type="GO" id="GO:0005524">
    <property type="term" value="F:ATP binding"/>
    <property type="evidence" value="ECO:0007669"/>
    <property type="project" value="UniProtKB-UniRule"/>
</dbReference>
<dbReference type="GO" id="GO:0046872">
    <property type="term" value="F:metal ion binding"/>
    <property type="evidence" value="ECO:0007669"/>
    <property type="project" value="UniProtKB-KW"/>
</dbReference>
<dbReference type="GO" id="GO:0004829">
    <property type="term" value="F:threonine-tRNA ligase activity"/>
    <property type="evidence" value="ECO:0007669"/>
    <property type="project" value="UniProtKB-UniRule"/>
</dbReference>
<dbReference type="GO" id="GO:0000049">
    <property type="term" value="F:tRNA binding"/>
    <property type="evidence" value="ECO:0007669"/>
    <property type="project" value="UniProtKB-KW"/>
</dbReference>
<dbReference type="GO" id="GO:0006435">
    <property type="term" value="P:threonyl-tRNA aminoacylation"/>
    <property type="evidence" value="ECO:0007669"/>
    <property type="project" value="UniProtKB-UniRule"/>
</dbReference>
<dbReference type="CDD" id="cd01667">
    <property type="entry name" value="TGS_ThrRS"/>
    <property type="match status" value="1"/>
</dbReference>
<dbReference type="CDD" id="cd00860">
    <property type="entry name" value="ThrRS_anticodon"/>
    <property type="match status" value="1"/>
</dbReference>
<dbReference type="CDD" id="cd00771">
    <property type="entry name" value="ThrRS_core"/>
    <property type="match status" value="1"/>
</dbReference>
<dbReference type="FunFam" id="3.30.930.10:FF:000002">
    <property type="entry name" value="Threonine--tRNA ligase"/>
    <property type="match status" value="1"/>
</dbReference>
<dbReference type="FunFam" id="3.40.50.800:FF:000001">
    <property type="entry name" value="Threonine--tRNA ligase"/>
    <property type="match status" value="1"/>
</dbReference>
<dbReference type="Gene3D" id="3.10.20.30">
    <property type="match status" value="1"/>
</dbReference>
<dbReference type="Gene3D" id="3.30.54.20">
    <property type="match status" value="1"/>
</dbReference>
<dbReference type="Gene3D" id="3.40.50.800">
    <property type="entry name" value="Anticodon-binding domain"/>
    <property type="match status" value="1"/>
</dbReference>
<dbReference type="Gene3D" id="3.30.930.10">
    <property type="entry name" value="Bira Bifunctional Protein, Domain 2"/>
    <property type="match status" value="1"/>
</dbReference>
<dbReference type="Gene3D" id="3.30.980.10">
    <property type="entry name" value="Threonyl-trna Synthetase, Chain A, domain 2"/>
    <property type="match status" value="1"/>
</dbReference>
<dbReference type="HAMAP" id="MF_00184">
    <property type="entry name" value="Thr_tRNA_synth"/>
    <property type="match status" value="1"/>
</dbReference>
<dbReference type="InterPro" id="IPR002314">
    <property type="entry name" value="aa-tRNA-synt_IIb"/>
</dbReference>
<dbReference type="InterPro" id="IPR006195">
    <property type="entry name" value="aa-tRNA-synth_II"/>
</dbReference>
<dbReference type="InterPro" id="IPR045864">
    <property type="entry name" value="aa-tRNA-synth_II/BPL/LPL"/>
</dbReference>
<dbReference type="InterPro" id="IPR004154">
    <property type="entry name" value="Anticodon-bd"/>
</dbReference>
<dbReference type="InterPro" id="IPR036621">
    <property type="entry name" value="Anticodon-bd_dom_sf"/>
</dbReference>
<dbReference type="InterPro" id="IPR012675">
    <property type="entry name" value="Beta-grasp_dom_sf"/>
</dbReference>
<dbReference type="InterPro" id="IPR004095">
    <property type="entry name" value="TGS"/>
</dbReference>
<dbReference type="InterPro" id="IPR012676">
    <property type="entry name" value="TGS-like"/>
</dbReference>
<dbReference type="InterPro" id="IPR002320">
    <property type="entry name" value="Thr-tRNA-ligase_IIa"/>
</dbReference>
<dbReference type="InterPro" id="IPR018163">
    <property type="entry name" value="Thr/Ala-tRNA-synth_IIc_edit"/>
</dbReference>
<dbReference type="InterPro" id="IPR047246">
    <property type="entry name" value="ThrRS_anticodon"/>
</dbReference>
<dbReference type="InterPro" id="IPR033728">
    <property type="entry name" value="ThrRS_core"/>
</dbReference>
<dbReference type="InterPro" id="IPR012947">
    <property type="entry name" value="tRNA_SAD"/>
</dbReference>
<dbReference type="NCBIfam" id="TIGR00418">
    <property type="entry name" value="thrS"/>
    <property type="match status" value="1"/>
</dbReference>
<dbReference type="PANTHER" id="PTHR11451:SF44">
    <property type="entry name" value="THREONINE--TRNA LIGASE, CHLOROPLASTIC_MITOCHONDRIAL 2"/>
    <property type="match status" value="1"/>
</dbReference>
<dbReference type="PANTHER" id="PTHR11451">
    <property type="entry name" value="THREONINE-TRNA LIGASE"/>
    <property type="match status" value="1"/>
</dbReference>
<dbReference type="Pfam" id="PF03129">
    <property type="entry name" value="HGTP_anticodon"/>
    <property type="match status" value="1"/>
</dbReference>
<dbReference type="Pfam" id="PF02824">
    <property type="entry name" value="TGS"/>
    <property type="match status" value="1"/>
</dbReference>
<dbReference type="Pfam" id="PF00587">
    <property type="entry name" value="tRNA-synt_2b"/>
    <property type="match status" value="1"/>
</dbReference>
<dbReference type="Pfam" id="PF07973">
    <property type="entry name" value="tRNA_SAD"/>
    <property type="match status" value="1"/>
</dbReference>
<dbReference type="PRINTS" id="PR01047">
    <property type="entry name" value="TRNASYNTHTHR"/>
</dbReference>
<dbReference type="SMART" id="SM00863">
    <property type="entry name" value="tRNA_SAD"/>
    <property type="match status" value="1"/>
</dbReference>
<dbReference type="SUPFAM" id="SSF52954">
    <property type="entry name" value="Class II aaRS ABD-related"/>
    <property type="match status" value="1"/>
</dbReference>
<dbReference type="SUPFAM" id="SSF55681">
    <property type="entry name" value="Class II aaRS and biotin synthetases"/>
    <property type="match status" value="1"/>
</dbReference>
<dbReference type="SUPFAM" id="SSF81271">
    <property type="entry name" value="TGS-like"/>
    <property type="match status" value="1"/>
</dbReference>
<dbReference type="SUPFAM" id="SSF55186">
    <property type="entry name" value="ThrRS/AlaRS common domain"/>
    <property type="match status" value="1"/>
</dbReference>
<dbReference type="PROSITE" id="PS50862">
    <property type="entry name" value="AA_TRNA_LIGASE_II"/>
    <property type="match status" value="1"/>
</dbReference>
<dbReference type="PROSITE" id="PS51880">
    <property type="entry name" value="TGS"/>
    <property type="match status" value="1"/>
</dbReference>
<protein>
    <recommendedName>
        <fullName evidence="1">Threonine--tRNA ligase</fullName>
        <ecNumber evidence="1">6.1.1.3</ecNumber>
    </recommendedName>
    <alternativeName>
        <fullName evidence="1">Threonyl-tRNA synthetase</fullName>
        <shortName evidence="1">ThrRS</shortName>
    </alternativeName>
</protein>